<reference key="1">
    <citation type="journal article" date="2009" name="PLoS Genet.">
        <title>Adaptations to submarine hydrothermal environments exemplified by the genome of Nautilia profundicola.</title>
        <authorList>
            <person name="Campbell B.J."/>
            <person name="Smith J.L."/>
            <person name="Hanson T.E."/>
            <person name="Klotz M.G."/>
            <person name="Stein L.Y."/>
            <person name="Lee C.K."/>
            <person name="Wu D."/>
            <person name="Robinson J.M."/>
            <person name="Khouri H.M."/>
            <person name="Eisen J.A."/>
            <person name="Cary S.C."/>
        </authorList>
    </citation>
    <scope>NUCLEOTIDE SEQUENCE [LARGE SCALE GENOMIC DNA]</scope>
    <source>
        <strain>ATCC BAA-1463 / DSM 18972 / AmH</strain>
    </source>
</reference>
<proteinExistence type="inferred from homology"/>
<feature type="chain" id="PRO_1000166076" description="Large ribosomal subunit protein uL22">
    <location>
        <begin position="1"/>
        <end position="106"/>
    </location>
</feature>
<organism>
    <name type="scientific">Nautilia profundicola (strain ATCC BAA-1463 / DSM 18972 / AmH)</name>
    <dbReference type="NCBI Taxonomy" id="598659"/>
    <lineage>
        <taxon>Bacteria</taxon>
        <taxon>Pseudomonadati</taxon>
        <taxon>Campylobacterota</taxon>
        <taxon>Epsilonproteobacteria</taxon>
        <taxon>Nautiliales</taxon>
        <taxon>Nautiliaceae</taxon>
        <taxon>Nautilia</taxon>
    </lineage>
</organism>
<comment type="function">
    <text evidence="1">This protein binds specifically to 23S rRNA; its binding is stimulated by other ribosomal proteins, e.g. L4, L17, and L20. It is important during the early stages of 50S assembly. It makes multiple contacts with different domains of the 23S rRNA in the assembled 50S subunit and ribosome (By similarity).</text>
</comment>
<comment type="function">
    <text evidence="1">The globular domain of the protein is located near the polypeptide exit tunnel on the outside of the subunit, while an extended beta-hairpin is found that lines the wall of the exit tunnel in the center of the 70S ribosome.</text>
</comment>
<comment type="subunit">
    <text evidence="1">Part of the 50S ribosomal subunit.</text>
</comment>
<comment type="similarity">
    <text evidence="1">Belongs to the universal ribosomal protein uL22 family.</text>
</comment>
<sequence>MSKAVLKFIRLSPTKARLIAKEIQGMNAEEALAKLEFMPNKAARVIAKVVASAVANGGYDANEVVITSCRIDRGPYLKRFRPRARGMASRIQKPTAHIFVEVEKES</sequence>
<dbReference type="EMBL" id="CP001279">
    <property type="protein sequence ID" value="ACM92399.1"/>
    <property type="molecule type" value="Genomic_DNA"/>
</dbReference>
<dbReference type="RefSeq" id="WP_012663770.1">
    <property type="nucleotide sequence ID" value="NC_012115.1"/>
</dbReference>
<dbReference type="SMR" id="B9L6M8"/>
<dbReference type="STRING" id="598659.NAMH_1636"/>
<dbReference type="KEGG" id="nam:NAMH_1636"/>
<dbReference type="eggNOG" id="COG0091">
    <property type="taxonomic scope" value="Bacteria"/>
</dbReference>
<dbReference type="HOGENOM" id="CLU_083987_3_3_7"/>
<dbReference type="OrthoDB" id="9805969at2"/>
<dbReference type="Proteomes" id="UP000000448">
    <property type="component" value="Chromosome"/>
</dbReference>
<dbReference type="GO" id="GO:0022625">
    <property type="term" value="C:cytosolic large ribosomal subunit"/>
    <property type="evidence" value="ECO:0007669"/>
    <property type="project" value="TreeGrafter"/>
</dbReference>
<dbReference type="GO" id="GO:0019843">
    <property type="term" value="F:rRNA binding"/>
    <property type="evidence" value="ECO:0007669"/>
    <property type="project" value="UniProtKB-UniRule"/>
</dbReference>
<dbReference type="GO" id="GO:0003735">
    <property type="term" value="F:structural constituent of ribosome"/>
    <property type="evidence" value="ECO:0007669"/>
    <property type="project" value="InterPro"/>
</dbReference>
<dbReference type="GO" id="GO:0006412">
    <property type="term" value="P:translation"/>
    <property type="evidence" value="ECO:0007669"/>
    <property type="project" value="UniProtKB-UniRule"/>
</dbReference>
<dbReference type="CDD" id="cd00336">
    <property type="entry name" value="Ribosomal_L22"/>
    <property type="match status" value="1"/>
</dbReference>
<dbReference type="Gene3D" id="3.90.470.10">
    <property type="entry name" value="Ribosomal protein L22/L17"/>
    <property type="match status" value="1"/>
</dbReference>
<dbReference type="HAMAP" id="MF_01331_B">
    <property type="entry name" value="Ribosomal_uL22_B"/>
    <property type="match status" value="1"/>
</dbReference>
<dbReference type="InterPro" id="IPR001063">
    <property type="entry name" value="Ribosomal_uL22"/>
</dbReference>
<dbReference type="InterPro" id="IPR005727">
    <property type="entry name" value="Ribosomal_uL22_bac/chlpt-type"/>
</dbReference>
<dbReference type="InterPro" id="IPR047867">
    <property type="entry name" value="Ribosomal_uL22_bac/org-type"/>
</dbReference>
<dbReference type="InterPro" id="IPR036394">
    <property type="entry name" value="Ribosomal_uL22_sf"/>
</dbReference>
<dbReference type="NCBIfam" id="TIGR01044">
    <property type="entry name" value="rplV_bact"/>
    <property type="match status" value="1"/>
</dbReference>
<dbReference type="PANTHER" id="PTHR13501">
    <property type="entry name" value="CHLOROPLAST 50S RIBOSOMAL PROTEIN L22-RELATED"/>
    <property type="match status" value="1"/>
</dbReference>
<dbReference type="PANTHER" id="PTHR13501:SF8">
    <property type="entry name" value="LARGE RIBOSOMAL SUBUNIT PROTEIN UL22M"/>
    <property type="match status" value="1"/>
</dbReference>
<dbReference type="Pfam" id="PF00237">
    <property type="entry name" value="Ribosomal_L22"/>
    <property type="match status" value="1"/>
</dbReference>
<dbReference type="SUPFAM" id="SSF54843">
    <property type="entry name" value="Ribosomal protein L22"/>
    <property type="match status" value="1"/>
</dbReference>
<keyword id="KW-0687">Ribonucleoprotein</keyword>
<keyword id="KW-0689">Ribosomal protein</keyword>
<keyword id="KW-0694">RNA-binding</keyword>
<keyword id="KW-0699">rRNA-binding</keyword>
<protein>
    <recommendedName>
        <fullName evidence="1">Large ribosomal subunit protein uL22</fullName>
    </recommendedName>
    <alternativeName>
        <fullName evidence="2">50S ribosomal protein L22</fullName>
    </alternativeName>
</protein>
<gene>
    <name evidence="1" type="primary">rplV</name>
    <name type="ordered locus">NAMH_1636</name>
</gene>
<evidence type="ECO:0000255" key="1">
    <source>
        <dbReference type="HAMAP-Rule" id="MF_01331"/>
    </source>
</evidence>
<evidence type="ECO:0000305" key="2"/>
<accession>B9L6M8</accession>
<name>RL22_NAUPA</name>